<accession>Q7P1H8</accession>
<reference key="1">
    <citation type="journal article" date="2003" name="Proc. Natl. Acad. Sci. U.S.A.">
        <title>The complete genome sequence of Chromobacterium violaceum reveals remarkable and exploitable bacterial adaptability.</title>
        <authorList>
            <person name="Vasconcelos A.T.R."/>
            <person name="de Almeida D.F."/>
            <person name="Hungria M."/>
            <person name="Guimaraes C.T."/>
            <person name="Antonio R.V."/>
            <person name="Almeida F.C."/>
            <person name="de Almeida L.G.P."/>
            <person name="de Almeida R."/>
            <person name="Alves-Gomes J.A."/>
            <person name="Andrade E.M."/>
            <person name="Araripe J."/>
            <person name="de Araujo M.F.F."/>
            <person name="Astolfi-Filho S."/>
            <person name="Azevedo V."/>
            <person name="Baptista A.J."/>
            <person name="Bataus L.A.M."/>
            <person name="Batista J.S."/>
            <person name="Belo A."/>
            <person name="van den Berg C."/>
            <person name="Bogo M."/>
            <person name="Bonatto S."/>
            <person name="Bordignon J."/>
            <person name="Brigido M.M."/>
            <person name="Brito C.A."/>
            <person name="Brocchi M."/>
            <person name="Burity H.A."/>
            <person name="Camargo A.A."/>
            <person name="Cardoso D.D.P."/>
            <person name="Carneiro N.P."/>
            <person name="Carraro D.M."/>
            <person name="Carvalho C.M.B."/>
            <person name="Cascardo J.C.M."/>
            <person name="Cavada B.S."/>
            <person name="Chueire L.M.O."/>
            <person name="Creczynski-Pasa T.B."/>
            <person name="Cunha-Junior N.C."/>
            <person name="Fagundes N."/>
            <person name="Falcao C.L."/>
            <person name="Fantinatti F."/>
            <person name="Farias I.P."/>
            <person name="Felipe M.S.S."/>
            <person name="Ferrari L.P."/>
            <person name="Ferro J.A."/>
            <person name="Ferro M.I.T."/>
            <person name="Franco G.R."/>
            <person name="Freitas N.S.A."/>
            <person name="Furlan L.R."/>
            <person name="Gazzinelli R.T."/>
            <person name="Gomes E.A."/>
            <person name="Goncalves P.R."/>
            <person name="Grangeiro T.B."/>
            <person name="Grattapaglia D."/>
            <person name="Grisard E.C."/>
            <person name="Hanna E.S."/>
            <person name="Jardim S.N."/>
            <person name="Laurino J."/>
            <person name="Leoi L.C.T."/>
            <person name="Lima L.F.A."/>
            <person name="Loureiro M.F."/>
            <person name="Lyra M.C.C.P."/>
            <person name="Madeira H.M.F."/>
            <person name="Manfio G.P."/>
            <person name="Maranhao A.Q."/>
            <person name="Martins W.S."/>
            <person name="di Mauro S.M.Z."/>
            <person name="de Medeiros S.R.B."/>
            <person name="Meissner R.V."/>
            <person name="Moreira M.A.M."/>
            <person name="Nascimento F.F."/>
            <person name="Nicolas M.F."/>
            <person name="Oliveira J.G."/>
            <person name="Oliveira S.C."/>
            <person name="Paixao R.F.C."/>
            <person name="Parente J.A."/>
            <person name="Pedrosa F.O."/>
            <person name="Pena S.D.J."/>
            <person name="Pereira J.O."/>
            <person name="Pereira M."/>
            <person name="Pinto L.S.R.C."/>
            <person name="Pinto L.S."/>
            <person name="Porto J.I.R."/>
            <person name="Potrich D.P."/>
            <person name="Ramalho-Neto C.E."/>
            <person name="Reis A.M.M."/>
            <person name="Rigo L.U."/>
            <person name="Rondinelli E."/>
            <person name="Santos E.B.P."/>
            <person name="Santos F.R."/>
            <person name="Schneider M.P.C."/>
            <person name="Seuanez H.N."/>
            <person name="Silva A.M.R."/>
            <person name="da Silva A.L.C."/>
            <person name="Silva D.W."/>
            <person name="Silva R."/>
            <person name="Simoes I.C."/>
            <person name="Simon D."/>
            <person name="Soares C.M.A."/>
            <person name="Soares R.B.A."/>
            <person name="Souza E.M."/>
            <person name="Souza K.R.L."/>
            <person name="Souza R.C."/>
            <person name="Steffens M.B.R."/>
            <person name="Steindel M."/>
            <person name="Teixeira S.R."/>
            <person name="Urmenyi T."/>
            <person name="Vettore A."/>
            <person name="Wassem R."/>
            <person name="Zaha A."/>
            <person name="Simpson A.J.G."/>
        </authorList>
    </citation>
    <scope>NUCLEOTIDE SEQUENCE [LARGE SCALE GENOMIC DNA]</scope>
    <source>
        <strain>ATCC 12472 / DSM 30191 / JCM 1249 / CCUG 213 / NBRC 12614 / NCIMB 9131 / NCTC 9757 / MK</strain>
    </source>
</reference>
<organism>
    <name type="scientific">Chromobacterium violaceum (strain ATCC 12472 / DSM 30191 / JCM 1249 / CCUG 213 / NBRC 12614 / NCIMB 9131 / NCTC 9757 / MK)</name>
    <dbReference type="NCBI Taxonomy" id="243365"/>
    <lineage>
        <taxon>Bacteria</taxon>
        <taxon>Pseudomonadati</taxon>
        <taxon>Pseudomonadota</taxon>
        <taxon>Betaproteobacteria</taxon>
        <taxon>Neisseriales</taxon>
        <taxon>Chromobacteriaceae</taxon>
        <taxon>Chromobacterium</taxon>
    </lineage>
</organism>
<name>THIC_CHRVO</name>
<evidence type="ECO:0000255" key="1">
    <source>
        <dbReference type="HAMAP-Rule" id="MF_00089"/>
    </source>
</evidence>
<proteinExistence type="inferred from homology"/>
<protein>
    <recommendedName>
        <fullName evidence="1">Phosphomethylpyrimidine synthase</fullName>
        <ecNumber evidence="1">4.1.99.17</ecNumber>
    </recommendedName>
    <alternativeName>
        <fullName evidence="1">Hydroxymethylpyrimidine phosphate synthase</fullName>
        <shortName evidence="1">HMP-P synthase</shortName>
        <shortName evidence="1">HMP-phosphate synthase</shortName>
        <shortName evidence="1">HMPP synthase</shortName>
    </alternativeName>
    <alternativeName>
        <fullName evidence="1">Thiamine biosynthesis protein ThiC</fullName>
    </alternativeName>
</protein>
<feature type="chain" id="PRO_0000152795" description="Phosphomethylpyrimidine synthase">
    <location>
        <begin position="1"/>
        <end position="632"/>
    </location>
</feature>
<feature type="binding site" evidence="1">
    <location>
        <position position="237"/>
    </location>
    <ligand>
        <name>substrate</name>
    </ligand>
</feature>
<feature type="binding site" evidence="1">
    <location>
        <position position="266"/>
    </location>
    <ligand>
        <name>substrate</name>
    </ligand>
</feature>
<feature type="binding site" evidence="1">
    <location>
        <position position="295"/>
    </location>
    <ligand>
        <name>substrate</name>
    </ligand>
</feature>
<feature type="binding site" evidence="1">
    <location>
        <position position="331"/>
    </location>
    <ligand>
        <name>substrate</name>
    </ligand>
</feature>
<feature type="binding site" evidence="1">
    <location>
        <begin position="351"/>
        <end position="353"/>
    </location>
    <ligand>
        <name>substrate</name>
    </ligand>
</feature>
<feature type="binding site" evidence="1">
    <location>
        <begin position="392"/>
        <end position="395"/>
    </location>
    <ligand>
        <name>substrate</name>
    </ligand>
</feature>
<feature type="binding site" evidence="1">
    <location>
        <position position="431"/>
    </location>
    <ligand>
        <name>substrate</name>
    </ligand>
</feature>
<feature type="binding site" evidence="1">
    <location>
        <position position="435"/>
    </location>
    <ligand>
        <name>Zn(2+)</name>
        <dbReference type="ChEBI" id="CHEBI:29105"/>
    </ligand>
</feature>
<feature type="binding site" evidence="1">
    <location>
        <position position="458"/>
    </location>
    <ligand>
        <name>substrate</name>
    </ligand>
</feature>
<feature type="binding site" evidence="1">
    <location>
        <position position="499"/>
    </location>
    <ligand>
        <name>Zn(2+)</name>
        <dbReference type="ChEBI" id="CHEBI:29105"/>
    </ligand>
</feature>
<feature type="binding site" evidence="1">
    <location>
        <position position="579"/>
    </location>
    <ligand>
        <name>[4Fe-4S] cluster</name>
        <dbReference type="ChEBI" id="CHEBI:49883"/>
        <note>4Fe-4S-S-AdoMet</note>
    </ligand>
</feature>
<feature type="binding site" evidence="1">
    <location>
        <position position="582"/>
    </location>
    <ligand>
        <name>[4Fe-4S] cluster</name>
        <dbReference type="ChEBI" id="CHEBI:49883"/>
        <note>4Fe-4S-S-AdoMet</note>
    </ligand>
</feature>
<feature type="binding site" evidence="1">
    <location>
        <position position="587"/>
    </location>
    <ligand>
        <name>[4Fe-4S] cluster</name>
        <dbReference type="ChEBI" id="CHEBI:49883"/>
        <note>4Fe-4S-S-AdoMet</note>
    </ligand>
</feature>
<gene>
    <name evidence="1" type="primary">thiC</name>
    <name type="ordered locus">CV_0235</name>
</gene>
<sequence>MNAPVNKQMVVDAAAIQPLPNSRKIYVEGSRPDIQVPMREIRQADTPTQFGGEKNPPIFVYDTSGPYSDPAARIDIQSGLAPLRAAWIAQRGDCEQLPGLSSEYGRAREADPKLAELRFNLQRKPRRAKAGRNVTQMHYARRGIVTPEMEFVAIRENLNRRAYVESLQAAGNRRLLDLMTRQHQGQSFGAHLPEEITPEFVREEIAAGRAIIPANINHPESEPMIIGRNFLVKINGNIGNSAVTSSISEEVDKMTWGIRWGADTIMDLSTGKNIHETREWILRNSPVPIGTVPIYQALEKVNGKAEDLSWEIFRDTLIEQAEQGVDYFTIHAGVRLAYVPMTANRMTGIVSRGGSIMAKWCLAHHRENFLYTHFEDICEIMKAYDVAFSLGDGLRPGSAWDANDEAQLSELKTLGELTEIAWKHDVQVMIEGPGHVPMQLIKENMDKELEWCREAPFYTLGPLTTDIAPGYDHITSAIGAAQIGWYGTAMLCYVTQKEHLGLPNKHDVKEGIITYKLAAHAADLAKGHPGAQIRDNALSKARFEFRWEDQFNLGLDPDKARDFHDETLPKDSAKVAHFCSMCGPHFCSMKITQDVREYAASQGVGEQDALRLGMREKAIEFVKGGGKLYDKV</sequence>
<comment type="function">
    <text evidence="1">Catalyzes the synthesis of the hydroxymethylpyrimidine phosphate (HMP-P) moiety of thiamine from aminoimidazole ribotide (AIR) in a radical S-adenosyl-L-methionine (SAM)-dependent reaction.</text>
</comment>
<comment type="catalytic activity">
    <reaction evidence="1">
        <text>5-amino-1-(5-phospho-beta-D-ribosyl)imidazole + S-adenosyl-L-methionine = 4-amino-2-methyl-5-(phosphooxymethyl)pyrimidine + CO + 5'-deoxyadenosine + formate + L-methionine + 3 H(+)</text>
        <dbReference type="Rhea" id="RHEA:24840"/>
        <dbReference type="ChEBI" id="CHEBI:15378"/>
        <dbReference type="ChEBI" id="CHEBI:15740"/>
        <dbReference type="ChEBI" id="CHEBI:17245"/>
        <dbReference type="ChEBI" id="CHEBI:17319"/>
        <dbReference type="ChEBI" id="CHEBI:57844"/>
        <dbReference type="ChEBI" id="CHEBI:58354"/>
        <dbReference type="ChEBI" id="CHEBI:59789"/>
        <dbReference type="ChEBI" id="CHEBI:137981"/>
        <dbReference type="EC" id="4.1.99.17"/>
    </reaction>
</comment>
<comment type="cofactor">
    <cofactor evidence="1">
        <name>[4Fe-4S] cluster</name>
        <dbReference type="ChEBI" id="CHEBI:49883"/>
    </cofactor>
    <text evidence="1">Binds 1 [4Fe-4S] cluster per subunit. The cluster is coordinated with 3 cysteines and an exchangeable S-adenosyl-L-methionine.</text>
</comment>
<comment type="pathway">
    <text evidence="1">Cofactor biosynthesis; thiamine diphosphate biosynthesis.</text>
</comment>
<comment type="subunit">
    <text evidence="1">Homodimer.</text>
</comment>
<comment type="similarity">
    <text evidence="1">Belongs to the ThiC family.</text>
</comment>
<keyword id="KW-0004">4Fe-4S</keyword>
<keyword id="KW-0408">Iron</keyword>
<keyword id="KW-0411">Iron-sulfur</keyword>
<keyword id="KW-0456">Lyase</keyword>
<keyword id="KW-0479">Metal-binding</keyword>
<keyword id="KW-1185">Reference proteome</keyword>
<keyword id="KW-0949">S-adenosyl-L-methionine</keyword>
<keyword id="KW-0784">Thiamine biosynthesis</keyword>
<keyword id="KW-0862">Zinc</keyword>
<dbReference type="EC" id="4.1.99.17" evidence="1"/>
<dbReference type="EMBL" id="AE016825">
    <property type="protein sequence ID" value="AAQ57914.1"/>
    <property type="molecule type" value="Genomic_DNA"/>
</dbReference>
<dbReference type="SMR" id="Q7P1H8"/>
<dbReference type="STRING" id="243365.CV_0235"/>
<dbReference type="KEGG" id="cvi:CV_0235"/>
<dbReference type="eggNOG" id="COG0422">
    <property type="taxonomic scope" value="Bacteria"/>
</dbReference>
<dbReference type="HOGENOM" id="CLU_013181_2_1_4"/>
<dbReference type="OrthoDB" id="9805897at2"/>
<dbReference type="UniPathway" id="UPA00060"/>
<dbReference type="Proteomes" id="UP000001424">
    <property type="component" value="Chromosome"/>
</dbReference>
<dbReference type="GO" id="GO:0005829">
    <property type="term" value="C:cytosol"/>
    <property type="evidence" value="ECO:0007669"/>
    <property type="project" value="TreeGrafter"/>
</dbReference>
<dbReference type="GO" id="GO:0051539">
    <property type="term" value="F:4 iron, 4 sulfur cluster binding"/>
    <property type="evidence" value="ECO:0007669"/>
    <property type="project" value="UniProtKB-KW"/>
</dbReference>
<dbReference type="GO" id="GO:0016830">
    <property type="term" value="F:carbon-carbon lyase activity"/>
    <property type="evidence" value="ECO:0007669"/>
    <property type="project" value="InterPro"/>
</dbReference>
<dbReference type="GO" id="GO:0008270">
    <property type="term" value="F:zinc ion binding"/>
    <property type="evidence" value="ECO:0007669"/>
    <property type="project" value="UniProtKB-UniRule"/>
</dbReference>
<dbReference type="GO" id="GO:0009228">
    <property type="term" value="P:thiamine biosynthetic process"/>
    <property type="evidence" value="ECO:0007669"/>
    <property type="project" value="UniProtKB-KW"/>
</dbReference>
<dbReference type="GO" id="GO:0009229">
    <property type="term" value="P:thiamine diphosphate biosynthetic process"/>
    <property type="evidence" value="ECO:0007669"/>
    <property type="project" value="UniProtKB-UniRule"/>
</dbReference>
<dbReference type="FunFam" id="3.20.20.540:FF:000001">
    <property type="entry name" value="Phosphomethylpyrimidine synthase"/>
    <property type="match status" value="1"/>
</dbReference>
<dbReference type="Gene3D" id="6.10.250.620">
    <property type="match status" value="1"/>
</dbReference>
<dbReference type="Gene3D" id="3.20.20.540">
    <property type="entry name" value="Radical SAM ThiC family, central domain"/>
    <property type="match status" value="1"/>
</dbReference>
<dbReference type="HAMAP" id="MF_00089">
    <property type="entry name" value="ThiC"/>
    <property type="match status" value="1"/>
</dbReference>
<dbReference type="InterPro" id="IPR037509">
    <property type="entry name" value="ThiC"/>
</dbReference>
<dbReference type="InterPro" id="IPR025747">
    <property type="entry name" value="ThiC-associated_dom"/>
</dbReference>
<dbReference type="InterPro" id="IPR038521">
    <property type="entry name" value="ThiC/Bza_core_dom"/>
</dbReference>
<dbReference type="InterPro" id="IPR002817">
    <property type="entry name" value="ThiC/BzaA/B"/>
</dbReference>
<dbReference type="NCBIfam" id="NF006763">
    <property type="entry name" value="PRK09284.1"/>
    <property type="match status" value="1"/>
</dbReference>
<dbReference type="NCBIfam" id="NF009895">
    <property type="entry name" value="PRK13352.1"/>
    <property type="match status" value="1"/>
</dbReference>
<dbReference type="NCBIfam" id="TIGR00190">
    <property type="entry name" value="thiC"/>
    <property type="match status" value="1"/>
</dbReference>
<dbReference type="PANTHER" id="PTHR30557:SF1">
    <property type="entry name" value="PHOSPHOMETHYLPYRIMIDINE SYNTHASE, CHLOROPLASTIC"/>
    <property type="match status" value="1"/>
</dbReference>
<dbReference type="PANTHER" id="PTHR30557">
    <property type="entry name" value="THIAMINE BIOSYNTHESIS PROTEIN THIC"/>
    <property type="match status" value="1"/>
</dbReference>
<dbReference type="Pfam" id="PF13667">
    <property type="entry name" value="ThiC-associated"/>
    <property type="match status" value="1"/>
</dbReference>
<dbReference type="Pfam" id="PF01964">
    <property type="entry name" value="ThiC_Rad_SAM"/>
    <property type="match status" value="1"/>
</dbReference>
<dbReference type="SFLD" id="SFLDF00407">
    <property type="entry name" value="phosphomethylpyrimidine_syntha"/>
    <property type="match status" value="1"/>
</dbReference>
<dbReference type="SFLD" id="SFLDG01114">
    <property type="entry name" value="phosphomethylpyrimidine_syntha"/>
    <property type="match status" value="1"/>
</dbReference>
<dbReference type="SFLD" id="SFLDS00113">
    <property type="entry name" value="Radical_SAM_Phosphomethylpyrim"/>
    <property type="match status" value="1"/>
</dbReference>